<reference key="1">
    <citation type="journal article" date="1992" name="FEBS Lett.">
        <title>The primary structure of a PYY-related peptide from chicken intestine suggests an anomalous site of cleavage of the signal peptide in preproPYY.</title>
        <authorList>
            <person name="Conlon J.M."/>
            <person name="O'Harte F."/>
        </authorList>
    </citation>
    <scope>PROTEIN SEQUENCE</scope>
    <scope>AMIDATION AT TYR-37</scope>
    <source>
        <strain>White leghorn</strain>
        <tissue>Intestine</tissue>
    </source>
</reference>
<dbReference type="PIR" id="S26954">
    <property type="entry name" value="S26954"/>
</dbReference>
<dbReference type="SMR" id="P29203"/>
<dbReference type="STRING" id="9031.ENSGALP00000059469"/>
<dbReference type="InParanoid" id="P29203"/>
<dbReference type="PhylomeDB" id="P29203"/>
<dbReference type="Proteomes" id="UP000000539">
    <property type="component" value="Unassembled WGS sequence"/>
</dbReference>
<dbReference type="GO" id="GO:0005576">
    <property type="term" value="C:extracellular region"/>
    <property type="evidence" value="ECO:0007669"/>
    <property type="project" value="UniProtKB-SubCell"/>
</dbReference>
<dbReference type="GO" id="GO:0005179">
    <property type="term" value="F:hormone activity"/>
    <property type="evidence" value="ECO:0007669"/>
    <property type="project" value="UniProtKB-KW"/>
</dbReference>
<dbReference type="CDD" id="cd00126">
    <property type="entry name" value="PAH"/>
    <property type="match status" value="1"/>
</dbReference>
<dbReference type="Gene3D" id="6.10.250.900">
    <property type="match status" value="1"/>
</dbReference>
<dbReference type="InterPro" id="IPR001955">
    <property type="entry name" value="Pancreatic_hormone-like"/>
</dbReference>
<dbReference type="InterPro" id="IPR020392">
    <property type="entry name" value="Pancreatic_hormone-like_CS"/>
</dbReference>
<dbReference type="PANTHER" id="PTHR10533">
    <property type="entry name" value="NEUROPEPTIDE Y/PANCREATIC HORMONE/PEPTIDE YY"/>
    <property type="match status" value="1"/>
</dbReference>
<dbReference type="PANTHER" id="PTHR10533:SF14">
    <property type="entry name" value="PEPTIDE YY-RELATED"/>
    <property type="match status" value="1"/>
</dbReference>
<dbReference type="Pfam" id="PF00159">
    <property type="entry name" value="Hormone_3"/>
    <property type="match status" value="1"/>
</dbReference>
<dbReference type="PRINTS" id="PR00278">
    <property type="entry name" value="PANCHORMONE"/>
</dbReference>
<dbReference type="SMART" id="SM00309">
    <property type="entry name" value="PAH"/>
    <property type="match status" value="1"/>
</dbReference>
<dbReference type="PROSITE" id="PS00265">
    <property type="entry name" value="PANCREATIC_HORMONE_1"/>
    <property type="match status" value="1"/>
</dbReference>
<dbReference type="PROSITE" id="PS50276">
    <property type="entry name" value="PANCREATIC_HORMONE_2"/>
    <property type="match status" value="1"/>
</dbReference>
<protein>
    <recommendedName>
        <fullName>Peptide YY-like</fullName>
        <shortName>PYY</shortName>
    </recommendedName>
</protein>
<proteinExistence type="evidence at protein level"/>
<gene>
    <name type="primary">PYY</name>
</gene>
<feature type="peptide" id="PRO_0000044811" description="Peptide YY-like">
    <location>
        <begin position="1"/>
        <end position="37"/>
    </location>
</feature>
<feature type="modified residue" description="Tyrosine amide" evidence="2">
    <location>
        <position position="37"/>
    </location>
</feature>
<accession>P29203</accession>
<name>PYY_CHICK</name>
<keyword id="KW-0027">Amidation</keyword>
<keyword id="KW-0903">Direct protein sequencing</keyword>
<keyword id="KW-0372">Hormone</keyword>
<keyword id="KW-1185">Reference proteome</keyword>
<keyword id="KW-0964">Secreted</keyword>
<comment type="function">
    <text evidence="1">This gut peptide inhibits exocrine pancreatic secretion, has a vasoconstrictory action and inhibitis jejunal and colonic mobility.</text>
</comment>
<comment type="subcellular location">
    <subcellularLocation>
        <location>Secreted</location>
    </subcellularLocation>
</comment>
<comment type="similarity">
    <text evidence="3">Belongs to the NPY family.</text>
</comment>
<organism>
    <name type="scientific">Gallus gallus</name>
    <name type="common">Chicken</name>
    <dbReference type="NCBI Taxonomy" id="9031"/>
    <lineage>
        <taxon>Eukaryota</taxon>
        <taxon>Metazoa</taxon>
        <taxon>Chordata</taxon>
        <taxon>Craniata</taxon>
        <taxon>Vertebrata</taxon>
        <taxon>Euteleostomi</taxon>
        <taxon>Archelosauria</taxon>
        <taxon>Archosauria</taxon>
        <taxon>Dinosauria</taxon>
        <taxon>Saurischia</taxon>
        <taxon>Theropoda</taxon>
        <taxon>Coelurosauria</taxon>
        <taxon>Aves</taxon>
        <taxon>Neognathae</taxon>
        <taxon>Galloanserae</taxon>
        <taxon>Galliformes</taxon>
        <taxon>Phasianidae</taxon>
        <taxon>Phasianinae</taxon>
        <taxon>Gallus</taxon>
    </lineage>
</organism>
<sequence length="37" mass="4237">AYPPKPESPGDAASPEEIAQYFSALRHYINLVTRQRY</sequence>
<evidence type="ECO:0000250" key="1"/>
<evidence type="ECO:0000269" key="2">
    <source>
    </source>
</evidence>
<evidence type="ECO:0000305" key="3"/>